<gene>
    <name evidence="1" type="primary">rplX</name>
    <name type="ordered locus">JTY_0735</name>
</gene>
<evidence type="ECO:0000255" key="1">
    <source>
        <dbReference type="HAMAP-Rule" id="MF_01326"/>
    </source>
</evidence>
<evidence type="ECO:0000305" key="2"/>
<reference key="1">
    <citation type="journal article" date="2009" name="Vaccine">
        <title>Whole genome sequence analysis of Mycobacterium bovis bacillus Calmette-Guerin (BCG) Tokyo 172: a comparative study of BCG vaccine substrains.</title>
        <authorList>
            <person name="Seki M."/>
            <person name="Honda I."/>
            <person name="Fujita I."/>
            <person name="Yano I."/>
            <person name="Yamamoto S."/>
            <person name="Koyama A."/>
        </authorList>
    </citation>
    <scope>NUCLEOTIDE SEQUENCE [LARGE SCALE GENOMIC DNA]</scope>
    <source>
        <strain>BCG / Tokyo 172 / ATCC 35737 / TMC 1019</strain>
    </source>
</reference>
<name>RL24_MYCBT</name>
<keyword id="KW-0687">Ribonucleoprotein</keyword>
<keyword id="KW-0689">Ribosomal protein</keyword>
<keyword id="KW-0694">RNA-binding</keyword>
<keyword id="KW-0699">rRNA-binding</keyword>
<proteinExistence type="inferred from homology"/>
<sequence>MKVHKGDTVLVISGKDKGAKGKVLQAYPDRNRVLVEGVNRIKKHTAISTTQRGARSGGIVTQEAPIHVSNVMVVDSDGKPTRIGYRVDEETGKRVRISKRNGKDI</sequence>
<protein>
    <recommendedName>
        <fullName evidence="1">Large ribosomal subunit protein uL24</fullName>
    </recommendedName>
    <alternativeName>
        <fullName evidence="2">50S ribosomal protein L24</fullName>
    </alternativeName>
</protein>
<accession>C1AL49</accession>
<dbReference type="EMBL" id="AP010918">
    <property type="protein sequence ID" value="BAH25028.1"/>
    <property type="molecule type" value="Genomic_DNA"/>
</dbReference>
<dbReference type="RefSeq" id="WP_003403654.1">
    <property type="nucleotide sequence ID" value="NZ_CP014566.1"/>
</dbReference>
<dbReference type="SMR" id="C1AL49"/>
<dbReference type="GeneID" id="45424680"/>
<dbReference type="KEGG" id="mbt:JTY_0735"/>
<dbReference type="HOGENOM" id="CLU_093315_2_0_11"/>
<dbReference type="GO" id="GO:1990904">
    <property type="term" value="C:ribonucleoprotein complex"/>
    <property type="evidence" value="ECO:0007669"/>
    <property type="project" value="UniProtKB-KW"/>
</dbReference>
<dbReference type="GO" id="GO:0005840">
    <property type="term" value="C:ribosome"/>
    <property type="evidence" value="ECO:0007669"/>
    <property type="project" value="UniProtKB-KW"/>
</dbReference>
<dbReference type="GO" id="GO:0019843">
    <property type="term" value="F:rRNA binding"/>
    <property type="evidence" value="ECO:0007669"/>
    <property type="project" value="UniProtKB-UniRule"/>
</dbReference>
<dbReference type="GO" id="GO:0003735">
    <property type="term" value="F:structural constituent of ribosome"/>
    <property type="evidence" value="ECO:0007669"/>
    <property type="project" value="InterPro"/>
</dbReference>
<dbReference type="GO" id="GO:0006412">
    <property type="term" value="P:translation"/>
    <property type="evidence" value="ECO:0007669"/>
    <property type="project" value="UniProtKB-UniRule"/>
</dbReference>
<dbReference type="CDD" id="cd06089">
    <property type="entry name" value="KOW_RPL26"/>
    <property type="match status" value="1"/>
</dbReference>
<dbReference type="FunFam" id="2.30.30.30:FF:000004">
    <property type="entry name" value="50S ribosomal protein L24"/>
    <property type="match status" value="1"/>
</dbReference>
<dbReference type="Gene3D" id="2.30.30.30">
    <property type="match status" value="1"/>
</dbReference>
<dbReference type="HAMAP" id="MF_01326_B">
    <property type="entry name" value="Ribosomal_uL24_B"/>
    <property type="match status" value="1"/>
</dbReference>
<dbReference type="InterPro" id="IPR005824">
    <property type="entry name" value="KOW"/>
</dbReference>
<dbReference type="InterPro" id="IPR014722">
    <property type="entry name" value="Rib_uL2_dom2"/>
</dbReference>
<dbReference type="InterPro" id="IPR003256">
    <property type="entry name" value="Ribosomal_uL24"/>
</dbReference>
<dbReference type="InterPro" id="IPR005825">
    <property type="entry name" value="Ribosomal_uL24_CS"/>
</dbReference>
<dbReference type="InterPro" id="IPR041988">
    <property type="entry name" value="Ribosomal_uL24_KOW"/>
</dbReference>
<dbReference type="InterPro" id="IPR008991">
    <property type="entry name" value="Translation_prot_SH3-like_sf"/>
</dbReference>
<dbReference type="NCBIfam" id="TIGR01079">
    <property type="entry name" value="rplX_bact"/>
    <property type="match status" value="1"/>
</dbReference>
<dbReference type="PANTHER" id="PTHR12903">
    <property type="entry name" value="MITOCHONDRIAL RIBOSOMAL PROTEIN L24"/>
    <property type="match status" value="1"/>
</dbReference>
<dbReference type="Pfam" id="PF00467">
    <property type="entry name" value="KOW"/>
    <property type="match status" value="1"/>
</dbReference>
<dbReference type="Pfam" id="PF17136">
    <property type="entry name" value="ribosomal_L24"/>
    <property type="match status" value="1"/>
</dbReference>
<dbReference type="SMART" id="SM00739">
    <property type="entry name" value="KOW"/>
    <property type="match status" value="1"/>
</dbReference>
<dbReference type="SUPFAM" id="SSF50104">
    <property type="entry name" value="Translation proteins SH3-like domain"/>
    <property type="match status" value="1"/>
</dbReference>
<dbReference type="PROSITE" id="PS01108">
    <property type="entry name" value="RIBOSOMAL_L24"/>
    <property type="match status" value="1"/>
</dbReference>
<feature type="chain" id="PRO_1000165956" description="Large ribosomal subunit protein uL24">
    <location>
        <begin position="1"/>
        <end position="105"/>
    </location>
</feature>
<comment type="function">
    <text evidence="1">One of two assembly initiator proteins, it binds directly to the 5'-end of the 23S rRNA, where it nucleates assembly of the 50S subunit.</text>
</comment>
<comment type="function">
    <text evidence="1">One of the proteins that surrounds the polypeptide exit tunnel on the outside of the subunit.</text>
</comment>
<comment type="subunit">
    <text evidence="1">Part of the 50S ribosomal subunit.</text>
</comment>
<comment type="similarity">
    <text evidence="1">Belongs to the universal ribosomal protein uL24 family.</text>
</comment>
<organism>
    <name type="scientific">Mycobacterium bovis (strain BCG / Tokyo 172 / ATCC 35737 / TMC 1019)</name>
    <dbReference type="NCBI Taxonomy" id="561275"/>
    <lineage>
        <taxon>Bacteria</taxon>
        <taxon>Bacillati</taxon>
        <taxon>Actinomycetota</taxon>
        <taxon>Actinomycetes</taxon>
        <taxon>Mycobacteriales</taxon>
        <taxon>Mycobacteriaceae</taxon>
        <taxon>Mycobacterium</taxon>
        <taxon>Mycobacterium tuberculosis complex</taxon>
    </lineage>
</organism>